<protein>
    <recommendedName>
        <fullName>NifU-like protein C1709.19c</fullName>
    </recommendedName>
</protein>
<dbReference type="EMBL" id="CU329671">
    <property type="protein sequence ID" value="CAA21258.2"/>
    <property type="molecule type" value="Genomic_DNA"/>
</dbReference>
<dbReference type="PIR" id="T39647">
    <property type="entry name" value="T39647"/>
</dbReference>
<dbReference type="PIR" id="T40430">
    <property type="entry name" value="T40430"/>
</dbReference>
<dbReference type="SMR" id="Q9UUB8"/>
<dbReference type="BioGRID" id="276429">
    <property type="interactions" value="2"/>
</dbReference>
<dbReference type="FunCoup" id="Q9UUB8">
    <property type="interactions" value="251"/>
</dbReference>
<dbReference type="STRING" id="284812.Q9UUB8"/>
<dbReference type="iPTMnet" id="Q9UUB8"/>
<dbReference type="PaxDb" id="4896-SPBC1709.19c.1"/>
<dbReference type="EnsemblFungi" id="SPBC1709.19c.1">
    <property type="protein sequence ID" value="SPBC1709.19c.1:pep"/>
    <property type="gene ID" value="SPBC1709.19c"/>
</dbReference>
<dbReference type="KEGG" id="spo:2539883"/>
<dbReference type="PomBase" id="SPBC1709.19c"/>
<dbReference type="VEuPathDB" id="FungiDB:SPBC1709.19c"/>
<dbReference type="eggNOG" id="KOG2358">
    <property type="taxonomic scope" value="Eukaryota"/>
</dbReference>
<dbReference type="HOGENOM" id="CLU_060555_0_2_1"/>
<dbReference type="InParanoid" id="Q9UUB8"/>
<dbReference type="OMA" id="IFEHIME"/>
<dbReference type="PhylomeDB" id="Q9UUB8"/>
<dbReference type="PRO" id="PR:Q9UUB8"/>
<dbReference type="Proteomes" id="UP000002485">
    <property type="component" value="Chromosome II"/>
</dbReference>
<dbReference type="GO" id="GO:0120510">
    <property type="term" value="C:mitochondrial [4Fe-4S] assembly complex"/>
    <property type="evidence" value="ECO:0000304"/>
    <property type="project" value="PomBase"/>
</dbReference>
<dbReference type="GO" id="GO:0005759">
    <property type="term" value="C:mitochondrial matrix"/>
    <property type="evidence" value="ECO:0000266"/>
    <property type="project" value="PomBase"/>
</dbReference>
<dbReference type="GO" id="GO:0005739">
    <property type="term" value="C:mitochondrion"/>
    <property type="evidence" value="ECO:0007005"/>
    <property type="project" value="PomBase"/>
</dbReference>
<dbReference type="GO" id="GO:0051539">
    <property type="term" value="F:4 iron, 4 sulfur cluster binding"/>
    <property type="evidence" value="ECO:0000318"/>
    <property type="project" value="GO_Central"/>
</dbReference>
<dbReference type="GO" id="GO:0005506">
    <property type="term" value="F:iron ion binding"/>
    <property type="evidence" value="ECO:0007669"/>
    <property type="project" value="InterPro"/>
</dbReference>
<dbReference type="GO" id="GO:0016226">
    <property type="term" value="P:iron-sulfur cluster assembly"/>
    <property type="evidence" value="ECO:0007669"/>
    <property type="project" value="InterPro"/>
</dbReference>
<dbReference type="FunFam" id="3.30.300.130:FF:000001">
    <property type="entry name" value="NFU1 iron-sulfur cluster scaffold"/>
    <property type="match status" value="1"/>
</dbReference>
<dbReference type="FunFam" id="3.30.1370.70:FF:000001">
    <property type="entry name" value="NifU-like protein 4, mitochondrial"/>
    <property type="match status" value="1"/>
</dbReference>
<dbReference type="Gene3D" id="3.30.300.130">
    <property type="entry name" value="Fe-S cluster assembly (FSCA)"/>
    <property type="match status" value="1"/>
</dbReference>
<dbReference type="Gene3D" id="3.30.1370.70">
    <property type="entry name" value="Scaffold protein Nfu/NifU, N-terminal domain"/>
    <property type="match status" value="1"/>
</dbReference>
<dbReference type="InterPro" id="IPR034904">
    <property type="entry name" value="FSCA_dom_sf"/>
</dbReference>
<dbReference type="InterPro" id="IPR014824">
    <property type="entry name" value="Nfu/NifU_N"/>
</dbReference>
<dbReference type="InterPro" id="IPR036498">
    <property type="entry name" value="Nfu/NifU_N_sf"/>
</dbReference>
<dbReference type="InterPro" id="IPR035433">
    <property type="entry name" value="NFU1-like"/>
</dbReference>
<dbReference type="InterPro" id="IPR001075">
    <property type="entry name" value="NIF_FeS_clus_asmbl_NifU_C"/>
</dbReference>
<dbReference type="PANTHER" id="PTHR11178">
    <property type="entry name" value="IRON-SULFUR CLUSTER SCAFFOLD PROTEIN NFU-RELATED"/>
    <property type="match status" value="1"/>
</dbReference>
<dbReference type="PANTHER" id="PTHR11178:SF1">
    <property type="entry name" value="NFU1 IRON-SULFUR CLUSTER SCAFFOLD HOMOLOG, MITOCHONDRIAL"/>
    <property type="match status" value="1"/>
</dbReference>
<dbReference type="Pfam" id="PF08712">
    <property type="entry name" value="Nfu_N"/>
    <property type="match status" value="1"/>
</dbReference>
<dbReference type="Pfam" id="PF01106">
    <property type="entry name" value="NifU"/>
    <property type="match status" value="1"/>
</dbReference>
<dbReference type="PIRSF" id="PIRSF036773">
    <property type="entry name" value="HIRIP5"/>
    <property type="match status" value="1"/>
</dbReference>
<dbReference type="SMART" id="SM00932">
    <property type="entry name" value="Nfu_N"/>
    <property type="match status" value="1"/>
</dbReference>
<dbReference type="SUPFAM" id="SSF117916">
    <property type="entry name" value="Fe-S cluster assembly (FSCA) domain-like"/>
    <property type="match status" value="1"/>
</dbReference>
<dbReference type="SUPFAM" id="SSF110836">
    <property type="entry name" value="Hypothetical protein SAV1430"/>
    <property type="match status" value="1"/>
</dbReference>
<organism>
    <name type="scientific">Schizosaccharomyces pombe (strain 972 / ATCC 24843)</name>
    <name type="common">Fission yeast</name>
    <dbReference type="NCBI Taxonomy" id="284812"/>
    <lineage>
        <taxon>Eukaryota</taxon>
        <taxon>Fungi</taxon>
        <taxon>Dikarya</taxon>
        <taxon>Ascomycota</taxon>
        <taxon>Taphrinomycotina</taxon>
        <taxon>Schizosaccharomycetes</taxon>
        <taxon>Schizosaccharomycetales</taxon>
        <taxon>Schizosaccharomycetaceae</taxon>
        <taxon>Schizosaccharomyces</taxon>
    </lineage>
</organism>
<name>YH9J_SCHPO</name>
<proteinExistence type="inferred from homology"/>
<gene>
    <name type="ORF">SPBC1709.19c</name>
    <name type="ORF">SPBC409.02c</name>
</gene>
<comment type="similarity">
    <text evidence="1">Belongs to the NifU family.</text>
</comment>
<evidence type="ECO:0000305" key="1"/>
<feature type="chain" id="PRO_0000166193" description="NifU-like protein C1709.19c">
    <location>
        <begin position="1"/>
        <end position="260"/>
    </location>
</feature>
<feature type="region of interest" description="NifU">
    <location>
        <begin position="161"/>
        <end position="231"/>
    </location>
</feature>
<reference key="1">
    <citation type="journal article" date="2002" name="Nature">
        <title>The genome sequence of Schizosaccharomyces pombe.</title>
        <authorList>
            <person name="Wood V."/>
            <person name="Gwilliam R."/>
            <person name="Rajandream M.A."/>
            <person name="Lyne M.H."/>
            <person name="Lyne R."/>
            <person name="Stewart A."/>
            <person name="Sgouros J.G."/>
            <person name="Peat N."/>
            <person name="Hayles J."/>
            <person name="Baker S.G."/>
            <person name="Basham D."/>
            <person name="Bowman S."/>
            <person name="Brooks K."/>
            <person name="Brown D."/>
            <person name="Brown S."/>
            <person name="Chillingworth T."/>
            <person name="Churcher C.M."/>
            <person name="Collins M."/>
            <person name="Connor R."/>
            <person name="Cronin A."/>
            <person name="Davis P."/>
            <person name="Feltwell T."/>
            <person name="Fraser A."/>
            <person name="Gentles S."/>
            <person name="Goble A."/>
            <person name="Hamlin N."/>
            <person name="Harris D.E."/>
            <person name="Hidalgo J."/>
            <person name="Hodgson G."/>
            <person name="Holroyd S."/>
            <person name="Hornsby T."/>
            <person name="Howarth S."/>
            <person name="Huckle E.J."/>
            <person name="Hunt S."/>
            <person name="Jagels K."/>
            <person name="James K.D."/>
            <person name="Jones L."/>
            <person name="Jones M."/>
            <person name="Leather S."/>
            <person name="McDonald S."/>
            <person name="McLean J."/>
            <person name="Mooney P."/>
            <person name="Moule S."/>
            <person name="Mungall K.L."/>
            <person name="Murphy L.D."/>
            <person name="Niblett D."/>
            <person name="Odell C."/>
            <person name="Oliver K."/>
            <person name="O'Neil S."/>
            <person name="Pearson D."/>
            <person name="Quail M.A."/>
            <person name="Rabbinowitsch E."/>
            <person name="Rutherford K.M."/>
            <person name="Rutter S."/>
            <person name="Saunders D."/>
            <person name="Seeger K."/>
            <person name="Sharp S."/>
            <person name="Skelton J."/>
            <person name="Simmonds M.N."/>
            <person name="Squares R."/>
            <person name="Squares S."/>
            <person name="Stevens K."/>
            <person name="Taylor K."/>
            <person name="Taylor R.G."/>
            <person name="Tivey A."/>
            <person name="Walsh S.V."/>
            <person name="Warren T."/>
            <person name="Whitehead S."/>
            <person name="Woodward J.R."/>
            <person name="Volckaert G."/>
            <person name="Aert R."/>
            <person name="Robben J."/>
            <person name="Grymonprez B."/>
            <person name="Weltjens I."/>
            <person name="Vanstreels E."/>
            <person name="Rieger M."/>
            <person name="Schaefer M."/>
            <person name="Mueller-Auer S."/>
            <person name="Gabel C."/>
            <person name="Fuchs M."/>
            <person name="Duesterhoeft A."/>
            <person name="Fritzc C."/>
            <person name="Holzer E."/>
            <person name="Moestl D."/>
            <person name="Hilbert H."/>
            <person name="Borzym K."/>
            <person name="Langer I."/>
            <person name="Beck A."/>
            <person name="Lehrach H."/>
            <person name="Reinhardt R."/>
            <person name="Pohl T.M."/>
            <person name="Eger P."/>
            <person name="Zimmermann W."/>
            <person name="Wedler H."/>
            <person name="Wambutt R."/>
            <person name="Purnelle B."/>
            <person name="Goffeau A."/>
            <person name="Cadieu E."/>
            <person name="Dreano S."/>
            <person name="Gloux S."/>
            <person name="Lelaure V."/>
            <person name="Mottier S."/>
            <person name="Galibert F."/>
            <person name="Aves S.J."/>
            <person name="Xiang Z."/>
            <person name="Hunt C."/>
            <person name="Moore K."/>
            <person name="Hurst S.M."/>
            <person name="Lucas M."/>
            <person name="Rochet M."/>
            <person name="Gaillardin C."/>
            <person name="Tallada V.A."/>
            <person name="Garzon A."/>
            <person name="Thode G."/>
            <person name="Daga R.R."/>
            <person name="Cruzado L."/>
            <person name="Jimenez J."/>
            <person name="Sanchez M."/>
            <person name="del Rey F."/>
            <person name="Benito J."/>
            <person name="Dominguez A."/>
            <person name="Revuelta J.L."/>
            <person name="Moreno S."/>
            <person name="Armstrong J."/>
            <person name="Forsburg S.L."/>
            <person name="Cerutti L."/>
            <person name="Lowe T."/>
            <person name="McCombie W.R."/>
            <person name="Paulsen I."/>
            <person name="Potashkin J."/>
            <person name="Shpakovski G.V."/>
            <person name="Ussery D."/>
            <person name="Barrell B.G."/>
            <person name="Nurse P."/>
        </authorList>
    </citation>
    <scope>NUCLEOTIDE SEQUENCE [LARGE SCALE GENOMIC DNA]</scope>
    <source>
        <strain>972 / ATCC 24843</strain>
    </source>
</reference>
<keyword id="KW-1185">Reference proteome</keyword>
<accession>Q9UUB8</accession>
<accession>O74744</accession>
<sequence>MLFPRVVPFQSLRTAFQKKTFLPVSSAGNVFTPRFQLQAIRSIWIRSEETPNENALKFLPGLDILPPTIGSCEFMRGQGTVNSPLAQKLFDIDGVDSIFFGKDFITVSKGAGTEWAQMKPEVFSVIMEHLSNGSPVLSEEPLKGASDTQILESDSQIVAMIKELIETSIRPSIQEDGGDVEFRGFDEKTGTVSLKLRGACRTCSSSAVTLKNGIQQMLKHYIPEVENVVQVLDPEEEVAIAEFEKFEQRINGNKQKADNK</sequence>